<organism>
    <name type="scientific">Mycobacterium tuberculosis (strain CDC 1551 / Oshkosh)</name>
    <dbReference type="NCBI Taxonomy" id="83331"/>
    <lineage>
        <taxon>Bacteria</taxon>
        <taxon>Bacillati</taxon>
        <taxon>Actinomycetota</taxon>
        <taxon>Actinomycetes</taxon>
        <taxon>Mycobacteriales</taxon>
        <taxon>Mycobacteriaceae</taxon>
        <taxon>Mycobacterium</taxon>
        <taxon>Mycobacterium tuberculosis complex</taxon>
    </lineage>
</organism>
<sequence length="504" mass="54408">MWWFRRRDRAPLRATSSLSLRWRVMLLAMSMVAMVVVLMSFAVYAVISAALYSDIDNQLQSRAQLLIASGSLAADPGKAIEGTAYSDVNAMLVNPGQSIYTAQQPGQTLPVGAAEKAVIRGELFMSRRTTADQRVLAIRLTNGSSLLISKSLKPTEAVMNKLRWVLLIVGGIGVAVAAVAGGMVTRAGLRPVGRLTEAAERVARTDDLRPIPVFGSDELARLTEAFNLMLRALAESRERQARLVTDAGHELRTPLTSLRTNVELLMASMAPGAPRLPKQEMVDLRADVLAQIEELSTLVGDLVDLSRGDAGEVVHEPVDMADVVDRSLERVRRRRNDILFDVEVIGWQVYGDTAGLSRMALNLMDNAAKWSPPGGHVGVRLSQLDASHAELVVSDRGPGIPVQERRLVFERFYRSASARALPGSGLGLAIVKQVVLNHGGLLRIEDTDPGGQPPGTSIYVLLPGRRMPIPQLPGATAGARSTDIENSRGSANVISVESQSTRAT</sequence>
<name>MPRB_MYCTO</name>
<comment type="function">
    <text evidence="1">Member of the two-component regulatory system MprB/MprA which contributes to maintaining a balance among several systems involved in stress resistance and is required for establishment and maintenance of persistent infection in the host. In response to environmental signals MprB acts both as a membrane-associated protein kinase that undergoes autophosphorylation and subsequently transfers the phosphate to MprA, and a protein phosphatase that dephosphorylates phospho-MprA. MprB/MprA is involved in regulation of numerous stress-responsive genes (By similarity).</text>
</comment>
<comment type="catalytic activity">
    <reaction>
        <text>ATP + protein L-histidine = ADP + protein N-phospho-L-histidine.</text>
        <dbReference type="EC" id="2.7.13.3"/>
    </reaction>
</comment>
<comment type="cofactor">
    <cofactor evidence="1">
        <name>Mg(2+)</name>
        <dbReference type="ChEBI" id="CHEBI:18420"/>
    </cofactor>
    <cofactor evidence="1">
        <name>Mn(2+)</name>
        <dbReference type="ChEBI" id="CHEBI:29035"/>
    </cofactor>
</comment>
<comment type="subcellular location">
    <subcellularLocation>
        <location evidence="6">Cell membrane</location>
        <topology evidence="6">Multi-pass membrane protein</topology>
    </subcellularLocation>
</comment>
<comment type="PTM">
    <text evidence="1">Autophosphorylated.</text>
</comment>
<proteinExistence type="inferred from homology"/>
<feature type="chain" id="PRO_0000428343" description="Signal transduction histidine-protein kinase/phosphatase MprB">
    <location>
        <begin position="1"/>
        <end position="504"/>
    </location>
</feature>
<feature type="topological domain" description="Cytoplasmic" evidence="2">
    <location>
        <begin position="1"/>
        <end position="26"/>
    </location>
</feature>
<feature type="transmembrane region" description="Helical" evidence="2">
    <location>
        <begin position="27"/>
        <end position="47"/>
    </location>
</feature>
<feature type="topological domain" description="Extracellular" evidence="2">
    <location>
        <begin position="48"/>
        <end position="163"/>
    </location>
</feature>
<feature type="transmembrane region" description="Helical" evidence="2">
    <location>
        <begin position="164"/>
        <end position="184"/>
    </location>
</feature>
<feature type="topological domain" description="Cytoplasmic" evidence="2">
    <location>
        <begin position="185"/>
        <end position="504"/>
    </location>
</feature>
<feature type="domain" description="HAMP" evidence="3">
    <location>
        <begin position="186"/>
        <end position="238"/>
    </location>
</feature>
<feature type="domain" description="Histidine kinase" evidence="4">
    <location>
        <begin position="246"/>
        <end position="466"/>
    </location>
</feature>
<feature type="region of interest" description="Disordered" evidence="5">
    <location>
        <begin position="471"/>
        <end position="504"/>
    </location>
</feature>
<feature type="compositionally biased region" description="Polar residues" evidence="5">
    <location>
        <begin position="487"/>
        <end position="504"/>
    </location>
</feature>
<feature type="modified residue" description="Phosphohistidine; by autocatalysis" evidence="4">
    <location>
        <position position="249"/>
    </location>
</feature>
<dbReference type="EC" id="2.7.13.3"/>
<dbReference type="EC" id="3.1.3.-"/>
<dbReference type="EMBL" id="AE000516">
    <property type="protein sequence ID" value="AAK45258.1"/>
    <property type="molecule type" value="Genomic_DNA"/>
</dbReference>
<dbReference type="PIR" id="B70821">
    <property type="entry name" value="B70821"/>
</dbReference>
<dbReference type="RefSeq" id="WP_003911317.1">
    <property type="nucleotide sequence ID" value="NZ_KK341227.1"/>
</dbReference>
<dbReference type="SMR" id="P9WGL0"/>
<dbReference type="KEGG" id="mtc:MT1010"/>
<dbReference type="PATRIC" id="fig|83331.31.peg.1084"/>
<dbReference type="HOGENOM" id="CLU_000445_89_6_11"/>
<dbReference type="Proteomes" id="UP000001020">
    <property type="component" value="Chromosome"/>
</dbReference>
<dbReference type="GO" id="GO:0005886">
    <property type="term" value="C:plasma membrane"/>
    <property type="evidence" value="ECO:0007669"/>
    <property type="project" value="UniProtKB-SubCell"/>
</dbReference>
<dbReference type="GO" id="GO:0005524">
    <property type="term" value="F:ATP binding"/>
    <property type="evidence" value="ECO:0007669"/>
    <property type="project" value="UniProtKB-KW"/>
</dbReference>
<dbReference type="GO" id="GO:0004721">
    <property type="term" value="F:phosphoprotein phosphatase activity"/>
    <property type="evidence" value="ECO:0007669"/>
    <property type="project" value="UniProtKB-KW"/>
</dbReference>
<dbReference type="GO" id="GO:0000155">
    <property type="term" value="F:phosphorelay sensor kinase activity"/>
    <property type="evidence" value="ECO:0007669"/>
    <property type="project" value="InterPro"/>
</dbReference>
<dbReference type="CDD" id="cd06225">
    <property type="entry name" value="HAMP"/>
    <property type="match status" value="1"/>
</dbReference>
<dbReference type="CDD" id="cd00075">
    <property type="entry name" value="HATPase"/>
    <property type="match status" value="1"/>
</dbReference>
<dbReference type="CDD" id="cd00082">
    <property type="entry name" value="HisKA"/>
    <property type="match status" value="1"/>
</dbReference>
<dbReference type="FunFam" id="1.10.287.130:FF:000031">
    <property type="entry name" value="Two-component sensor histidine kinase"/>
    <property type="match status" value="1"/>
</dbReference>
<dbReference type="FunFam" id="3.30.565.10:FF:000066">
    <property type="entry name" value="Two-component sensor kinase MprB"/>
    <property type="match status" value="1"/>
</dbReference>
<dbReference type="Gene3D" id="1.10.287.130">
    <property type="match status" value="1"/>
</dbReference>
<dbReference type="Gene3D" id="6.10.340.10">
    <property type="match status" value="1"/>
</dbReference>
<dbReference type="Gene3D" id="3.30.565.10">
    <property type="entry name" value="Histidine kinase-like ATPase, C-terminal domain"/>
    <property type="match status" value="1"/>
</dbReference>
<dbReference type="InterPro" id="IPR050980">
    <property type="entry name" value="2C_sensor_his_kinase"/>
</dbReference>
<dbReference type="InterPro" id="IPR003660">
    <property type="entry name" value="HAMP_dom"/>
</dbReference>
<dbReference type="InterPro" id="IPR036890">
    <property type="entry name" value="HATPase_C_sf"/>
</dbReference>
<dbReference type="InterPro" id="IPR005467">
    <property type="entry name" value="His_kinase_dom"/>
</dbReference>
<dbReference type="InterPro" id="IPR003661">
    <property type="entry name" value="HisK_dim/P_dom"/>
</dbReference>
<dbReference type="InterPro" id="IPR036097">
    <property type="entry name" value="HisK_dim/P_sf"/>
</dbReference>
<dbReference type="InterPro" id="IPR004358">
    <property type="entry name" value="Sig_transdc_His_kin-like_C"/>
</dbReference>
<dbReference type="PANTHER" id="PTHR44936">
    <property type="entry name" value="SENSOR PROTEIN CREC"/>
    <property type="match status" value="1"/>
</dbReference>
<dbReference type="PANTHER" id="PTHR44936:SF9">
    <property type="entry name" value="SENSOR PROTEIN CREC"/>
    <property type="match status" value="1"/>
</dbReference>
<dbReference type="Pfam" id="PF00672">
    <property type="entry name" value="HAMP"/>
    <property type="match status" value="1"/>
</dbReference>
<dbReference type="Pfam" id="PF02518">
    <property type="entry name" value="HATPase_c"/>
    <property type="match status" value="1"/>
</dbReference>
<dbReference type="Pfam" id="PF00512">
    <property type="entry name" value="HisKA"/>
    <property type="match status" value="1"/>
</dbReference>
<dbReference type="PRINTS" id="PR00344">
    <property type="entry name" value="BCTRLSENSOR"/>
</dbReference>
<dbReference type="SMART" id="SM00304">
    <property type="entry name" value="HAMP"/>
    <property type="match status" value="1"/>
</dbReference>
<dbReference type="SMART" id="SM00387">
    <property type="entry name" value="HATPase_c"/>
    <property type="match status" value="1"/>
</dbReference>
<dbReference type="SMART" id="SM00388">
    <property type="entry name" value="HisKA"/>
    <property type="match status" value="1"/>
</dbReference>
<dbReference type="SUPFAM" id="SSF55874">
    <property type="entry name" value="ATPase domain of HSP90 chaperone/DNA topoisomerase II/histidine kinase"/>
    <property type="match status" value="1"/>
</dbReference>
<dbReference type="SUPFAM" id="SSF158472">
    <property type="entry name" value="HAMP domain-like"/>
    <property type="match status" value="1"/>
</dbReference>
<dbReference type="SUPFAM" id="SSF47384">
    <property type="entry name" value="Homodimeric domain of signal transducing histidine kinase"/>
    <property type="match status" value="1"/>
</dbReference>
<dbReference type="PROSITE" id="PS50885">
    <property type="entry name" value="HAMP"/>
    <property type="match status" value="1"/>
</dbReference>
<dbReference type="PROSITE" id="PS50109">
    <property type="entry name" value="HIS_KIN"/>
    <property type="match status" value="1"/>
</dbReference>
<reference key="1">
    <citation type="journal article" date="2002" name="J. Bacteriol.">
        <title>Whole-genome comparison of Mycobacterium tuberculosis clinical and laboratory strains.</title>
        <authorList>
            <person name="Fleischmann R.D."/>
            <person name="Alland D."/>
            <person name="Eisen J.A."/>
            <person name="Carpenter L."/>
            <person name="White O."/>
            <person name="Peterson J.D."/>
            <person name="DeBoy R.T."/>
            <person name="Dodson R.J."/>
            <person name="Gwinn M.L."/>
            <person name="Haft D.H."/>
            <person name="Hickey E.K."/>
            <person name="Kolonay J.F."/>
            <person name="Nelson W.C."/>
            <person name="Umayam L.A."/>
            <person name="Ermolaeva M.D."/>
            <person name="Salzberg S.L."/>
            <person name="Delcher A."/>
            <person name="Utterback T.R."/>
            <person name="Weidman J.F."/>
            <person name="Khouri H.M."/>
            <person name="Gill J."/>
            <person name="Mikula A."/>
            <person name="Bishai W."/>
            <person name="Jacobs W.R. Jr."/>
            <person name="Venter J.C."/>
            <person name="Fraser C.M."/>
        </authorList>
    </citation>
    <scope>NUCLEOTIDE SEQUENCE [LARGE SCALE GENOMIC DNA]</scope>
    <source>
        <strain>CDC 1551 / Oshkosh</strain>
    </source>
</reference>
<evidence type="ECO:0000250" key="1"/>
<evidence type="ECO:0000255" key="2"/>
<evidence type="ECO:0000255" key="3">
    <source>
        <dbReference type="PROSITE-ProRule" id="PRU00102"/>
    </source>
</evidence>
<evidence type="ECO:0000255" key="4">
    <source>
        <dbReference type="PROSITE-ProRule" id="PRU00107"/>
    </source>
</evidence>
<evidence type="ECO:0000256" key="5">
    <source>
        <dbReference type="SAM" id="MobiDB-lite"/>
    </source>
</evidence>
<evidence type="ECO:0000305" key="6"/>
<gene>
    <name type="primary">mprB</name>
    <name type="ordered locus">MT1010</name>
</gene>
<keyword id="KW-0067">ATP-binding</keyword>
<keyword id="KW-1003">Cell membrane</keyword>
<keyword id="KW-0378">Hydrolase</keyword>
<keyword id="KW-0418">Kinase</keyword>
<keyword id="KW-0460">Magnesium</keyword>
<keyword id="KW-0464">Manganese</keyword>
<keyword id="KW-0472">Membrane</keyword>
<keyword id="KW-0547">Nucleotide-binding</keyword>
<keyword id="KW-0597">Phosphoprotein</keyword>
<keyword id="KW-0904">Protein phosphatase</keyword>
<keyword id="KW-1185">Reference proteome</keyword>
<keyword id="KW-0346">Stress response</keyword>
<keyword id="KW-0808">Transferase</keyword>
<keyword id="KW-0812">Transmembrane</keyword>
<keyword id="KW-1133">Transmembrane helix</keyword>
<keyword id="KW-0902">Two-component regulatory system</keyword>
<keyword id="KW-0843">Virulence</keyword>
<protein>
    <recommendedName>
        <fullName>Signal transduction histidine-protein kinase/phosphatase MprB</fullName>
        <ecNumber>2.7.13.3</ecNumber>
        <ecNumber>3.1.3.-</ecNumber>
    </recommendedName>
    <alternativeName>
        <fullName>Mycobacterial persistence regulator B</fullName>
    </alternativeName>
</protein>
<accession>P9WGL0</accession>
<accession>L0T8A3</accession>
<accession>O53895</accession>
<accession>Q7D913</accession>